<comment type="function">
    <text evidence="1">Transfers the gamma-phosphate of ATP to the 4'-position of a tetraacyldisaccharide 1-phosphate intermediate (termed DS-1-P) to form tetraacyldisaccharide 1,4'-bis-phosphate (lipid IVA).</text>
</comment>
<comment type="catalytic activity">
    <reaction evidence="1">
        <text>a lipid A disaccharide + ATP = a lipid IVA + ADP + H(+)</text>
        <dbReference type="Rhea" id="RHEA:67840"/>
        <dbReference type="ChEBI" id="CHEBI:15378"/>
        <dbReference type="ChEBI" id="CHEBI:30616"/>
        <dbReference type="ChEBI" id="CHEBI:176343"/>
        <dbReference type="ChEBI" id="CHEBI:176425"/>
        <dbReference type="ChEBI" id="CHEBI:456216"/>
        <dbReference type="EC" id="2.7.1.130"/>
    </reaction>
</comment>
<comment type="pathway">
    <text evidence="1">Glycolipid biosynthesis; lipid IV(A) biosynthesis; lipid IV(A) from (3R)-3-hydroxytetradecanoyl-[acyl-carrier-protein] and UDP-N-acetyl-alpha-D-glucosamine: step 6/6.</text>
</comment>
<comment type="similarity">
    <text evidence="1">Belongs to the LpxK family.</text>
</comment>
<sequence>MQFWYSRTWITWLMLPLSFLFWLISTCRQFLFRKGIFASYRAPVPVIVVGNLSVGGNGKTPVVIWLVKQLQQKGLKVGVISRGYGSQSSVYPLLVTPDTDPIQGGDEPVLIAKRTQVPVCISANRQHAIELLLQHQPDCDLIISDDGLQHYRLQRDFEIVVLDVQRGFGNGFLLPAGPLRELPSRLNTVDLIICHGQASKYSDVEMTLVPHHAINLVTGESRLLSDFHRVSAIAGIGHPQRFFSMLENLSMQLIQTKAFQDHQTFEAAQFVDFDQTQPLLMTEKDAVKCLSFAQKNWWYVPVEAEIKGEKVRSFLAKFDEIRKTV</sequence>
<feature type="chain" id="PRO_0000190934" description="Tetraacyldisaccharide 4'-kinase">
    <location>
        <begin position="1"/>
        <end position="325"/>
    </location>
</feature>
<feature type="binding site" evidence="1">
    <location>
        <begin position="53"/>
        <end position="60"/>
    </location>
    <ligand>
        <name>ATP</name>
        <dbReference type="ChEBI" id="CHEBI:30616"/>
    </ligand>
</feature>
<dbReference type="EC" id="2.7.1.130" evidence="1"/>
<dbReference type="EMBL" id="AE004439">
    <property type="protein sequence ID" value="AAK02944.1"/>
    <property type="molecule type" value="Genomic_DNA"/>
</dbReference>
<dbReference type="RefSeq" id="WP_005722669.1">
    <property type="nucleotide sequence ID" value="NC_002663.1"/>
</dbReference>
<dbReference type="SMR" id="Q9CMG8"/>
<dbReference type="STRING" id="272843.PM0860"/>
<dbReference type="EnsemblBacteria" id="AAK02944">
    <property type="protein sequence ID" value="AAK02944"/>
    <property type="gene ID" value="PM0860"/>
</dbReference>
<dbReference type="GeneID" id="77207711"/>
<dbReference type="KEGG" id="pmu:PM0860"/>
<dbReference type="HOGENOM" id="CLU_038816_2_0_6"/>
<dbReference type="OrthoDB" id="9766423at2"/>
<dbReference type="UniPathway" id="UPA00359">
    <property type="reaction ID" value="UER00482"/>
</dbReference>
<dbReference type="Proteomes" id="UP000000809">
    <property type="component" value="Chromosome"/>
</dbReference>
<dbReference type="GO" id="GO:0005886">
    <property type="term" value="C:plasma membrane"/>
    <property type="evidence" value="ECO:0007669"/>
    <property type="project" value="TreeGrafter"/>
</dbReference>
<dbReference type="GO" id="GO:0005524">
    <property type="term" value="F:ATP binding"/>
    <property type="evidence" value="ECO:0007669"/>
    <property type="project" value="UniProtKB-UniRule"/>
</dbReference>
<dbReference type="GO" id="GO:0009029">
    <property type="term" value="F:tetraacyldisaccharide 4'-kinase activity"/>
    <property type="evidence" value="ECO:0007669"/>
    <property type="project" value="UniProtKB-UniRule"/>
</dbReference>
<dbReference type="GO" id="GO:0009245">
    <property type="term" value="P:lipid A biosynthetic process"/>
    <property type="evidence" value="ECO:0007669"/>
    <property type="project" value="UniProtKB-UniRule"/>
</dbReference>
<dbReference type="GO" id="GO:0009244">
    <property type="term" value="P:lipopolysaccharide core region biosynthetic process"/>
    <property type="evidence" value="ECO:0007669"/>
    <property type="project" value="TreeGrafter"/>
</dbReference>
<dbReference type="HAMAP" id="MF_00409">
    <property type="entry name" value="LpxK"/>
    <property type="match status" value="1"/>
</dbReference>
<dbReference type="InterPro" id="IPR003758">
    <property type="entry name" value="LpxK"/>
</dbReference>
<dbReference type="InterPro" id="IPR027417">
    <property type="entry name" value="P-loop_NTPase"/>
</dbReference>
<dbReference type="NCBIfam" id="TIGR00682">
    <property type="entry name" value="lpxK"/>
    <property type="match status" value="1"/>
</dbReference>
<dbReference type="PANTHER" id="PTHR42724">
    <property type="entry name" value="TETRAACYLDISACCHARIDE 4'-KINASE"/>
    <property type="match status" value="1"/>
</dbReference>
<dbReference type="PANTHER" id="PTHR42724:SF1">
    <property type="entry name" value="TETRAACYLDISACCHARIDE 4'-KINASE, MITOCHONDRIAL-RELATED"/>
    <property type="match status" value="1"/>
</dbReference>
<dbReference type="Pfam" id="PF02606">
    <property type="entry name" value="LpxK"/>
    <property type="match status" value="1"/>
</dbReference>
<dbReference type="SUPFAM" id="SSF52540">
    <property type="entry name" value="P-loop containing nucleoside triphosphate hydrolases"/>
    <property type="match status" value="1"/>
</dbReference>
<accession>Q9CMG8</accession>
<gene>
    <name evidence="1" type="primary">lpxK</name>
    <name type="ordered locus">PM0860</name>
</gene>
<organism>
    <name type="scientific">Pasteurella multocida (strain Pm70)</name>
    <dbReference type="NCBI Taxonomy" id="272843"/>
    <lineage>
        <taxon>Bacteria</taxon>
        <taxon>Pseudomonadati</taxon>
        <taxon>Pseudomonadota</taxon>
        <taxon>Gammaproteobacteria</taxon>
        <taxon>Pasteurellales</taxon>
        <taxon>Pasteurellaceae</taxon>
        <taxon>Pasteurella</taxon>
    </lineage>
</organism>
<protein>
    <recommendedName>
        <fullName evidence="1">Tetraacyldisaccharide 4'-kinase</fullName>
        <ecNumber evidence="1">2.7.1.130</ecNumber>
    </recommendedName>
    <alternativeName>
        <fullName evidence="1">Lipid A 4'-kinase</fullName>
    </alternativeName>
</protein>
<keyword id="KW-0067">ATP-binding</keyword>
<keyword id="KW-0418">Kinase</keyword>
<keyword id="KW-0441">Lipid A biosynthesis</keyword>
<keyword id="KW-0444">Lipid biosynthesis</keyword>
<keyword id="KW-0443">Lipid metabolism</keyword>
<keyword id="KW-0547">Nucleotide-binding</keyword>
<keyword id="KW-1185">Reference proteome</keyword>
<keyword id="KW-0808">Transferase</keyword>
<reference key="1">
    <citation type="journal article" date="2001" name="Proc. Natl. Acad. Sci. U.S.A.">
        <title>Complete genomic sequence of Pasteurella multocida Pm70.</title>
        <authorList>
            <person name="May B.J."/>
            <person name="Zhang Q."/>
            <person name="Li L.L."/>
            <person name="Paustian M.L."/>
            <person name="Whittam T.S."/>
            <person name="Kapur V."/>
        </authorList>
    </citation>
    <scope>NUCLEOTIDE SEQUENCE [LARGE SCALE GENOMIC DNA]</scope>
    <source>
        <strain>Pm70</strain>
    </source>
</reference>
<proteinExistence type="inferred from homology"/>
<name>LPXK_PASMU</name>
<evidence type="ECO:0000255" key="1">
    <source>
        <dbReference type="HAMAP-Rule" id="MF_00409"/>
    </source>
</evidence>